<name>SYA_IGNH4</name>
<feature type="chain" id="PRO_0000347881" description="Alanine--tRNA ligase">
    <location>
        <begin position="1"/>
        <end position="901"/>
    </location>
</feature>
<feature type="binding site" evidence="1">
    <location>
        <position position="600"/>
    </location>
    <ligand>
        <name>Zn(2+)</name>
        <dbReference type="ChEBI" id="CHEBI:29105"/>
    </ligand>
</feature>
<feature type="binding site" evidence="1">
    <location>
        <position position="604"/>
    </location>
    <ligand>
        <name>Zn(2+)</name>
        <dbReference type="ChEBI" id="CHEBI:29105"/>
    </ligand>
</feature>
<feature type="binding site" evidence="1">
    <location>
        <position position="704"/>
    </location>
    <ligand>
        <name>Zn(2+)</name>
        <dbReference type="ChEBI" id="CHEBI:29105"/>
    </ligand>
</feature>
<feature type="binding site" evidence="1">
    <location>
        <position position="708"/>
    </location>
    <ligand>
        <name>Zn(2+)</name>
        <dbReference type="ChEBI" id="CHEBI:29105"/>
    </ligand>
</feature>
<evidence type="ECO:0000255" key="1">
    <source>
        <dbReference type="HAMAP-Rule" id="MF_00036"/>
    </source>
</evidence>
<reference key="1">
    <citation type="journal article" date="2008" name="Genome Biol.">
        <title>A genomic analysis of the archaeal system Ignicoccus hospitalis-Nanoarchaeum equitans.</title>
        <authorList>
            <person name="Podar M."/>
            <person name="Anderson I."/>
            <person name="Makarova K.S."/>
            <person name="Elkins J.G."/>
            <person name="Ivanova N."/>
            <person name="Wall M.A."/>
            <person name="Lykidis A."/>
            <person name="Mavromatis K."/>
            <person name="Sun H."/>
            <person name="Hudson M.E."/>
            <person name="Chen W."/>
            <person name="Deciu C."/>
            <person name="Hutchison D."/>
            <person name="Eads J.R."/>
            <person name="Anderson A."/>
            <person name="Fernandes F."/>
            <person name="Szeto E."/>
            <person name="Lapidus A."/>
            <person name="Kyrpides N.C."/>
            <person name="Saier M.H. Jr."/>
            <person name="Richardson P.M."/>
            <person name="Rachel R."/>
            <person name="Huber H."/>
            <person name="Eisen J.A."/>
            <person name="Koonin E.V."/>
            <person name="Keller M."/>
            <person name="Stetter K.O."/>
        </authorList>
    </citation>
    <scope>NUCLEOTIDE SEQUENCE [LARGE SCALE GENOMIC DNA]</scope>
    <source>
        <strain>KIN4/I / DSM 18386 / JCM 14125</strain>
    </source>
</reference>
<sequence>MENEYRLRFFEEEGLKRKRCKVCGSYFWTKGEHEVCGDSPCQEYEFFDVPTKVKLSLRDAKREFIKFFEEKGHVPVEPRPVVARWRDDLFLTIASIVVFQPHVTKGLVPPPANPLVIVQPCIRLEDIDNVGLTLGRHMTGFHMGGHHAFNYPDNWVYWKEETVKLAYEFFTERIGIPEELLNFKESWWEGGGNAGPSFEVTVAGLELATLVFMQYDVVEENGQKKYVPMKLKVVDTGYGIERIAWFTQKTPTAFHAVYGELLHEFHKRLGVEEPPDELLYELVRSAGLMDPERPETLERVYKRASEKLGMRVDEIREIHSRASLVYQVLDHTRTLMWMLADGIVPSNVGEGYLARLVIRRTLRALKKLKADVPLSELLELQINYWKDDYPRAWKNKDYILDVVEFEQKKFEETLKKGRNIVIRLIKKKKQITLDDLVELYDSHGIPPDIVSEIAKEMGVRVEVPHNFYSIVASRHQKTVHKVKGAEEKGKLPPEIIEWAKGFPPTRRLFHEDPYMKEFDAQVIGSNRNYVILDKTAFYPEGGGQAADTGVIASGDESYRVVDVQKVGDVIVHVLDRDYSGGKVVVGRIDWERRYRLMRHHTGTHLLLGALRKVLGDHVWQAGAEKTPEKARFDFTHHKPLTREEVRKIEEVANKVIDERRKIRAFTLPRNEAEARYWFSIYQGGVPMSKDIRLVEIEGWDVEACFGTHLSNTGEVGSLKIISTRKIQDGVVRVEFVAGTRVAEEAAKMEDLIREASEKLSTNPEMLVKRIDALQKELENVKKTVAEYRKRLVSEYLKAAKALDGIKYVKLDLRDPELVQEVLRALSSDSPAAVIVDGRVELAAPKGVDVGKAVREVVREVGCKGGGKGNRATVVCESEEKVVELLSKLAAKLTSQPSGRRG</sequence>
<organism>
    <name type="scientific">Ignicoccus hospitalis (strain KIN4/I / DSM 18386 / JCM 14125)</name>
    <dbReference type="NCBI Taxonomy" id="453591"/>
    <lineage>
        <taxon>Archaea</taxon>
        <taxon>Thermoproteota</taxon>
        <taxon>Thermoprotei</taxon>
        <taxon>Desulfurococcales</taxon>
        <taxon>Desulfurococcaceae</taxon>
        <taxon>Ignicoccus</taxon>
    </lineage>
</organism>
<protein>
    <recommendedName>
        <fullName evidence="1">Alanine--tRNA ligase</fullName>
        <ecNumber evidence="1">6.1.1.7</ecNumber>
    </recommendedName>
    <alternativeName>
        <fullName evidence="1">Alanyl-tRNA synthetase</fullName>
        <shortName evidence="1">AlaRS</shortName>
    </alternativeName>
</protein>
<keyword id="KW-0030">Aminoacyl-tRNA synthetase</keyword>
<keyword id="KW-0067">ATP-binding</keyword>
<keyword id="KW-0963">Cytoplasm</keyword>
<keyword id="KW-0436">Ligase</keyword>
<keyword id="KW-0479">Metal-binding</keyword>
<keyword id="KW-0547">Nucleotide-binding</keyword>
<keyword id="KW-0648">Protein biosynthesis</keyword>
<keyword id="KW-1185">Reference proteome</keyword>
<keyword id="KW-0694">RNA-binding</keyword>
<keyword id="KW-0820">tRNA-binding</keyword>
<keyword id="KW-0862">Zinc</keyword>
<dbReference type="EC" id="6.1.1.7" evidence="1"/>
<dbReference type="EMBL" id="CP000816">
    <property type="protein sequence ID" value="ABU81380.1"/>
    <property type="molecule type" value="Genomic_DNA"/>
</dbReference>
<dbReference type="RefSeq" id="WP_011998232.1">
    <property type="nucleotide sequence ID" value="NC_009776.1"/>
</dbReference>
<dbReference type="SMR" id="A8A8X8"/>
<dbReference type="STRING" id="453591.Igni_0196"/>
<dbReference type="GeneID" id="5562184"/>
<dbReference type="KEGG" id="iho:Igni_0196"/>
<dbReference type="eggNOG" id="arCOG01255">
    <property type="taxonomic scope" value="Archaea"/>
</dbReference>
<dbReference type="HOGENOM" id="CLU_004485_4_0_2"/>
<dbReference type="OrthoDB" id="7506at2157"/>
<dbReference type="PhylomeDB" id="A8A8X8"/>
<dbReference type="Proteomes" id="UP000000262">
    <property type="component" value="Chromosome"/>
</dbReference>
<dbReference type="GO" id="GO:0005737">
    <property type="term" value="C:cytoplasm"/>
    <property type="evidence" value="ECO:0007669"/>
    <property type="project" value="UniProtKB-SubCell"/>
</dbReference>
<dbReference type="GO" id="GO:0004813">
    <property type="term" value="F:alanine-tRNA ligase activity"/>
    <property type="evidence" value="ECO:0007669"/>
    <property type="project" value="UniProtKB-UniRule"/>
</dbReference>
<dbReference type="GO" id="GO:0002161">
    <property type="term" value="F:aminoacyl-tRNA deacylase activity"/>
    <property type="evidence" value="ECO:0007669"/>
    <property type="project" value="TreeGrafter"/>
</dbReference>
<dbReference type="GO" id="GO:0005524">
    <property type="term" value="F:ATP binding"/>
    <property type="evidence" value="ECO:0007669"/>
    <property type="project" value="UniProtKB-UniRule"/>
</dbReference>
<dbReference type="GO" id="GO:0000049">
    <property type="term" value="F:tRNA binding"/>
    <property type="evidence" value="ECO:0007669"/>
    <property type="project" value="UniProtKB-KW"/>
</dbReference>
<dbReference type="GO" id="GO:0008270">
    <property type="term" value="F:zinc ion binding"/>
    <property type="evidence" value="ECO:0007669"/>
    <property type="project" value="UniProtKB-UniRule"/>
</dbReference>
<dbReference type="GO" id="GO:0006419">
    <property type="term" value="P:alanyl-tRNA aminoacylation"/>
    <property type="evidence" value="ECO:0007669"/>
    <property type="project" value="UniProtKB-UniRule"/>
</dbReference>
<dbReference type="FunFam" id="2.40.30.130:FF:000010">
    <property type="entry name" value="Alanine--tRNA ligase"/>
    <property type="match status" value="1"/>
</dbReference>
<dbReference type="FunFam" id="3.30.54.20:FF:000004">
    <property type="entry name" value="Alanine--tRNA ligase"/>
    <property type="match status" value="1"/>
</dbReference>
<dbReference type="FunFam" id="3.30.980.10:FF:000002">
    <property type="entry name" value="Alanine--tRNA ligase"/>
    <property type="match status" value="1"/>
</dbReference>
<dbReference type="Gene3D" id="2.40.30.130">
    <property type="match status" value="1"/>
</dbReference>
<dbReference type="Gene3D" id="3.30.54.20">
    <property type="match status" value="1"/>
</dbReference>
<dbReference type="Gene3D" id="6.10.250.550">
    <property type="match status" value="1"/>
</dbReference>
<dbReference type="Gene3D" id="3.30.930.10">
    <property type="entry name" value="Bira Bifunctional Protein, Domain 2"/>
    <property type="match status" value="1"/>
</dbReference>
<dbReference type="Gene3D" id="3.30.980.10">
    <property type="entry name" value="Threonyl-trna Synthetase, Chain A, domain 2"/>
    <property type="match status" value="1"/>
</dbReference>
<dbReference type="HAMAP" id="MF_00036_A">
    <property type="entry name" value="Ala_tRNA_synth_A"/>
    <property type="match status" value="1"/>
</dbReference>
<dbReference type="InterPro" id="IPR045864">
    <property type="entry name" value="aa-tRNA-synth_II/BPL/LPL"/>
</dbReference>
<dbReference type="InterPro" id="IPR002318">
    <property type="entry name" value="Ala-tRNA-lgiase_IIc"/>
</dbReference>
<dbReference type="InterPro" id="IPR018162">
    <property type="entry name" value="Ala-tRNA-ligase_IIc_anticod-bd"/>
</dbReference>
<dbReference type="InterPro" id="IPR018165">
    <property type="entry name" value="Ala-tRNA-synth_IIc_core"/>
</dbReference>
<dbReference type="InterPro" id="IPR018164">
    <property type="entry name" value="Ala-tRNA-synth_IIc_N"/>
</dbReference>
<dbReference type="InterPro" id="IPR022429">
    <property type="entry name" value="Ala-tRNA_lgiase_arc"/>
</dbReference>
<dbReference type="InterPro" id="IPR050058">
    <property type="entry name" value="Ala-tRNA_ligase"/>
</dbReference>
<dbReference type="InterPro" id="IPR018163">
    <property type="entry name" value="Thr/Ala-tRNA-synth_IIc_edit"/>
</dbReference>
<dbReference type="InterPro" id="IPR009000">
    <property type="entry name" value="Transl_B-barrel_sf"/>
</dbReference>
<dbReference type="InterPro" id="IPR012947">
    <property type="entry name" value="tRNA_SAD"/>
</dbReference>
<dbReference type="NCBIfam" id="TIGR03683">
    <property type="entry name" value="A-tRNA_syn_arch"/>
    <property type="match status" value="1"/>
</dbReference>
<dbReference type="NCBIfam" id="TIGR00344">
    <property type="entry name" value="alaS"/>
    <property type="match status" value="1"/>
</dbReference>
<dbReference type="PANTHER" id="PTHR11777:SF9">
    <property type="entry name" value="ALANINE--TRNA LIGASE, CYTOPLASMIC"/>
    <property type="match status" value="1"/>
</dbReference>
<dbReference type="PANTHER" id="PTHR11777">
    <property type="entry name" value="ALANYL-TRNA SYNTHETASE"/>
    <property type="match status" value="1"/>
</dbReference>
<dbReference type="Pfam" id="PF01411">
    <property type="entry name" value="tRNA-synt_2c"/>
    <property type="match status" value="1"/>
</dbReference>
<dbReference type="Pfam" id="PF07973">
    <property type="entry name" value="tRNA_SAD"/>
    <property type="match status" value="1"/>
</dbReference>
<dbReference type="PRINTS" id="PR00980">
    <property type="entry name" value="TRNASYNTHALA"/>
</dbReference>
<dbReference type="SMART" id="SM00863">
    <property type="entry name" value="tRNA_SAD"/>
    <property type="match status" value="1"/>
</dbReference>
<dbReference type="SUPFAM" id="SSF55681">
    <property type="entry name" value="Class II aaRS and biotin synthetases"/>
    <property type="match status" value="1"/>
</dbReference>
<dbReference type="SUPFAM" id="SSF101353">
    <property type="entry name" value="Putative anticodon-binding domain of alanyl-tRNA synthetase (AlaRS)"/>
    <property type="match status" value="1"/>
</dbReference>
<dbReference type="SUPFAM" id="SSF55186">
    <property type="entry name" value="ThrRS/AlaRS common domain"/>
    <property type="match status" value="1"/>
</dbReference>
<dbReference type="SUPFAM" id="SSF50447">
    <property type="entry name" value="Translation proteins"/>
    <property type="match status" value="1"/>
</dbReference>
<dbReference type="PROSITE" id="PS50860">
    <property type="entry name" value="AA_TRNA_LIGASE_II_ALA"/>
    <property type="match status" value="1"/>
</dbReference>
<accession>A8A8X8</accession>
<comment type="function">
    <text evidence="1">Catalyzes the attachment of alanine to tRNA(Ala) in a two-step reaction: alanine is first activated by ATP to form Ala-AMP and then transferred to the acceptor end of tRNA(Ala). Also edits incorrectly charged Ser-tRNA(Ala) and Gly-tRNA(Ala) via its editing domain.</text>
</comment>
<comment type="catalytic activity">
    <reaction evidence="1">
        <text>tRNA(Ala) + L-alanine + ATP = L-alanyl-tRNA(Ala) + AMP + diphosphate</text>
        <dbReference type="Rhea" id="RHEA:12540"/>
        <dbReference type="Rhea" id="RHEA-COMP:9657"/>
        <dbReference type="Rhea" id="RHEA-COMP:9923"/>
        <dbReference type="ChEBI" id="CHEBI:30616"/>
        <dbReference type="ChEBI" id="CHEBI:33019"/>
        <dbReference type="ChEBI" id="CHEBI:57972"/>
        <dbReference type="ChEBI" id="CHEBI:78442"/>
        <dbReference type="ChEBI" id="CHEBI:78497"/>
        <dbReference type="ChEBI" id="CHEBI:456215"/>
        <dbReference type="EC" id="6.1.1.7"/>
    </reaction>
</comment>
<comment type="cofactor">
    <cofactor evidence="1">
        <name>Zn(2+)</name>
        <dbReference type="ChEBI" id="CHEBI:29105"/>
    </cofactor>
    <text evidence="1">Binds 1 zinc ion per subunit.</text>
</comment>
<comment type="subcellular location">
    <subcellularLocation>
        <location evidence="1">Cytoplasm</location>
    </subcellularLocation>
</comment>
<comment type="domain">
    <text evidence="1">Consists of three domains; the N-terminal catalytic domain, the editing domain and the C-terminal C-Ala domain. The editing domain removes incorrectly charged amino acids, while the C-Ala domain, along with tRNA(Ala), serves as a bridge to cooperatively bring together the editing and aminoacylation centers thus stimulating deacylation of misacylated tRNAs.</text>
</comment>
<comment type="similarity">
    <text evidence="1">Belongs to the class-II aminoacyl-tRNA synthetase family.</text>
</comment>
<proteinExistence type="inferred from homology"/>
<gene>
    <name evidence="1" type="primary">alaS</name>
    <name type="ordered locus">Igni_0196</name>
</gene>